<feature type="chain" id="PRO_1000140455" description="C4-dicarboxylate transport protein">
    <location>
        <begin position="1"/>
        <end position="428"/>
    </location>
</feature>
<feature type="transmembrane region" description="Helical" evidence="1">
    <location>
        <begin position="8"/>
        <end position="28"/>
    </location>
</feature>
<feature type="transmembrane region" description="Helical" evidence="1">
    <location>
        <begin position="44"/>
        <end position="64"/>
    </location>
</feature>
<feature type="transmembrane region" description="Helical" evidence="1">
    <location>
        <begin position="76"/>
        <end position="96"/>
    </location>
</feature>
<feature type="transmembrane region" description="Helical" evidence="1">
    <location>
        <begin position="142"/>
        <end position="162"/>
    </location>
</feature>
<feature type="transmembrane region" description="Helical" evidence="1">
    <location>
        <begin position="184"/>
        <end position="204"/>
    </location>
</feature>
<feature type="transmembrane region" description="Helical" evidence="1">
    <location>
        <begin position="222"/>
        <end position="242"/>
    </location>
</feature>
<feature type="transmembrane region" description="Helical" evidence="1">
    <location>
        <begin position="326"/>
        <end position="346"/>
    </location>
</feature>
<feature type="transmembrane region" description="Helical" evidence="1">
    <location>
        <begin position="352"/>
        <end position="372"/>
    </location>
</feature>
<keyword id="KW-0997">Cell inner membrane</keyword>
<keyword id="KW-1003">Cell membrane</keyword>
<keyword id="KW-0472">Membrane</keyword>
<keyword id="KW-0769">Symport</keyword>
<keyword id="KW-0812">Transmembrane</keyword>
<keyword id="KW-1133">Transmembrane helix</keyword>
<keyword id="KW-0813">Transport</keyword>
<evidence type="ECO:0000255" key="1">
    <source>
        <dbReference type="HAMAP-Rule" id="MF_01300"/>
    </source>
</evidence>
<accession>B6I394</accession>
<organism>
    <name type="scientific">Escherichia coli (strain SE11)</name>
    <dbReference type="NCBI Taxonomy" id="409438"/>
    <lineage>
        <taxon>Bacteria</taxon>
        <taxon>Pseudomonadati</taxon>
        <taxon>Pseudomonadota</taxon>
        <taxon>Gammaproteobacteria</taxon>
        <taxon>Enterobacterales</taxon>
        <taxon>Enterobacteriaceae</taxon>
        <taxon>Escherichia</taxon>
    </lineage>
</organism>
<protein>
    <recommendedName>
        <fullName evidence="1">C4-dicarboxylate transport protein</fullName>
    </recommendedName>
</protein>
<reference key="1">
    <citation type="journal article" date="2008" name="DNA Res.">
        <title>Complete genome sequence and comparative analysis of the wild-type commensal Escherichia coli strain SE11 isolated from a healthy adult.</title>
        <authorList>
            <person name="Oshima K."/>
            <person name="Toh H."/>
            <person name="Ogura Y."/>
            <person name="Sasamoto H."/>
            <person name="Morita H."/>
            <person name="Park S.-H."/>
            <person name="Ooka T."/>
            <person name="Iyoda S."/>
            <person name="Taylor T.D."/>
            <person name="Hayashi T."/>
            <person name="Itoh K."/>
            <person name="Hattori M."/>
        </authorList>
    </citation>
    <scope>NUCLEOTIDE SEQUENCE [LARGE SCALE GENOMIC DNA]</scope>
    <source>
        <strain>SE11</strain>
    </source>
</reference>
<dbReference type="EMBL" id="AP009240">
    <property type="protein sequence ID" value="BAG79321.1"/>
    <property type="molecule type" value="Genomic_DNA"/>
</dbReference>
<dbReference type="RefSeq" id="WP_000858214.1">
    <property type="nucleotide sequence ID" value="NC_011415.1"/>
</dbReference>
<dbReference type="SMR" id="B6I394"/>
<dbReference type="GeneID" id="93778248"/>
<dbReference type="KEGG" id="ecy:ECSE_3797"/>
<dbReference type="HOGENOM" id="CLU_019375_7_0_6"/>
<dbReference type="Proteomes" id="UP000008199">
    <property type="component" value="Chromosome"/>
</dbReference>
<dbReference type="GO" id="GO:0005886">
    <property type="term" value="C:plasma membrane"/>
    <property type="evidence" value="ECO:0007669"/>
    <property type="project" value="UniProtKB-SubCell"/>
</dbReference>
<dbReference type="GO" id="GO:0015138">
    <property type="term" value="F:fumarate transmembrane transporter activity"/>
    <property type="evidence" value="ECO:0007669"/>
    <property type="project" value="TreeGrafter"/>
</dbReference>
<dbReference type="GO" id="GO:0015366">
    <property type="term" value="F:malate:proton symporter activity"/>
    <property type="evidence" value="ECO:0007669"/>
    <property type="project" value="TreeGrafter"/>
</dbReference>
<dbReference type="GO" id="GO:0015141">
    <property type="term" value="F:succinate transmembrane transporter activity"/>
    <property type="evidence" value="ECO:0007669"/>
    <property type="project" value="TreeGrafter"/>
</dbReference>
<dbReference type="GO" id="GO:0070778">
    <property type="term" value="P:L-aspartate transmembrane transport"/>
    <property type="evidence" value="ECO:0007669"/>
    <property type="project" value="TreeGrafter"/>
</dbReference>
<dbReference type="FunFam" id="1.10.3860.10:FF:000001">
    <property type="entry name" value="C4-dicarboxylate transport protein"/>
    <property type="match status" value="1"/>
</dbReference>
<dbReference type="Gene3D" id="1.10.3860.10">
    <property type="entry name" value="Sodium:dicarboxylate symporter"/>
    <property type="match status" value="1"/>
</dbReference>
<dbReference type="HAMAP" id="MF_01300">
    <property type="entry name" value="C4_dicarb_transport"/>
    <property type="match status" value="1"/>
</dbReference>
<dbReference type="InterPro" id="IPR023954">
    <property type="entry name" value="C4_dicarb_transport"/>
</dbReference>
<dbReference type="InterPro" id="IPR001991">
    <property type="entry name" value="Na-dicarboxylate_symporter"/>
</dbReference>
<dbReference type="InterPro" id="IPR018107">
    <property type="entry name" value="Na-dicarboxylate_symporter_CS"/>
</dbReference>
<dbReference type="InterPro" id="IPR036458">
    <property type="entry name" value="Na:dicarbo_symporter_sf"/>
</dbReference>
<dbReference type="NCBIfam" id="NF002461">
    <property type="entry name" value="PRK01663.1"/>
    <property type="match status" value="1"/>
</dbReference>
<dbReference type="NCBIfam" id="NF009587">
    <property type="entry name" value="PRK13027.1"/>
    <property type="match status" value="1"/>
</dbReference>
<dbReference type="PANTHER" id="PTHR42865:SF1">
    <property type="entry name" value="AEROBIC C4-DICARBOXYLATE TRANSPORT PROTEIN"/>
    <property type="match status" value="1"/>
</dbReference>
<dbReference type="PANTHER" id="PTHR42865">
    <property type="entry name" value="PROTON/GLUTAMATE-ASPARTATE SYMPORTER"/>
    <property type="match status" value="1"/>
</dbReference>
<dbReference type="Pfam" id="PF00375">
    <property type="entry name" value="SDF"/>
    <property type="match status" value="1"/>
</dbReference>
<dbReference type="PRINTS" id="PR00173">
    <property type="entry name" value="EDTRNSPORT"/>
</dbReference>
<dbReference type="SUPFAM" id="SSF118215">
    <property type="entry name" value="Proton glutamate symport protein"/>
    <property type="match status" value="1"/>
</dbReference>
<dbReference type="PROSITE" id="PS00713">
    <property type="entry name" value="NA_DICARBOXYL_SYMP_1"/>
    <property type="match status" value="1"/>
</dbReference>
<dbReference type="PROSITE" id="PS00714">
    <property type="entry name" value="NA_DICARBOXYL_SYMP_2"/>
    <property type="match status" value="1"/>
</dbReference>
<gene>
    <name evidence="1" type="primary">dctA</name>
    <name type="ordered locus">ECSE_3797</name>
</gene>
<comment type="function">
    <text evidence="1">Responsible for the transport of dicarboxylates such as succinate, fumarate, and malate from the periplasm across the membrane.</text>
</comment>
<comment type="subcellular location">
    <subcellularLocation>
        <location evidence="1">Cell inner membrane</location>
        <topology evidence="1">Multi-pass membrane protein</topology>
    </subcellularLocation>
</comment>
<comment type="similarity">
    <text evidence="1">Belongs to the dicarboxylate/amino acid:cation symporter (DAACS) (TC 2.A.23) family.</text>
</comment>
<sequence>MKTSLFKSLYFQVLTAIAIGILLGHFYPEIGEQMKPLGDGFVKLIKMIIAPVIFCTVVTGIAGMESMKAVGRTGAVALLYFEIVSTIALIIGLIIVNVVQPGAGMNVDPATLDAKAVAVYADQAKDQGIVAFIMDVIPASVIGAFASGNILQVLLFAVLFGFALHRLGSKGQLIFNVIESFSQVIFGIINMIMRLAPIGAFGAMAFTIGKYGVGTLVQLGQLIICFYITCILFVVLVLGSIAKATGFSIFKFIRYIREELLIVLGTSSSESALPRMLDKMEKLGCRKSVVGLVIPTGYSFNLDGTSIYLTMAAVFIAQATNSQMDIVHQITLLIVLLLSSKGAAGVTGSGFIVLAATLSAVGHLPVAGLALILGIDRFMSEARALTNLVGNGVATIVVAKWVKELDHKKLDDVLNNRAPDGKTHELSS</sequence>
<proteinExistence type="inferred from homology"/>
<name>DCTA_ECOSE</name>